<reference evidence="6" key="1">
    <citation type="journal article" date="1998" name="Science">
        <title>Genome sequence of the nematode C. elegans: a platform for investigating biology.</title>
        <authorList>
            <consortium name="The C. elegans sequencing consortium"/>
        </authorList>
    </citation>
    <scope>NUCLEOTIDE SEQUENCE [LARGE SCALE GENOMIC DNA]</scope>
    <source>
        <strain evidence="6">Bristol N2</strain>
    </source>
</reference>
<reference evidence="5" key="2">
    <citation type="journal article" date="2013" name="PLoS ONE">
        <title>The 53BP1 homolog in C. elegans influences DNA repair and promotes apoptosis in response to ionizing radiation.</title>
        <authorList>
            <person name="Ryu J.S."/>
            <person name="Kang S.J."/>
            <person name="Koo H.S."/>
        </authorList>
    </citation>
    <scope>FUNCTION</scope>
    <scope>SUBCELLULAR LOCATION</scope>
    <scope>TISSUE SPECIFICITY</scope>
    <scope>INDUCTION</scope>
    <scope>DISRUPTION PHENOTYPE</scope>
</reference>
<feature type="chain" id="PRO_0000437442" description="Protein hsr-9" evidence="5">
    <location>
        <begin position="1"/>
        <end position="1165"/>
    </location>
</feature>
<feature type="domain" description="BRCT" evidence="1">
    <location>
        <begin position="923"/>
        <end position="1028"/>
    </location>
</feature>
<feature type="region of interest" description="Disordered" evidence="2">
    <location>
        <begin position="1"/>
        <end position="26"/>
    </location>
</feature>
<feature type="region of interest" description="Disordered" evidence="2">
    <location>
        <begin position="70"/>
        <end position="578"/>
    </location>
</feature>
<feature type="region of interest" description="Disordered" evidence="2">
    <location>
        <begin position="608"/>
        <end position="713"/>
    </location>
</feature>
<feature type="region of interest" description="Disordered" evidence="2">
    <location>
        <begin position="874"/>
        <end position="913"/>
    </location>
</feature>
<feature type="compositionally biased region" description="Low complexity" evidence="2">
    <location>
        <begin position="16"/>
        <end position="26"/>
    </location>
</feature>
<feature type="compositionally biased region" description="Basic and acidic residues" evidence="2">
    <location>
        <begin position="98"/>
        <end position="114"/>
    </location>
</feature>
<feature type="compositionally biased region" description="Basic and acidic residues" evidence="2">
    <location>
        <begin position="123"/>
        <end position="140"/>
    </location>
</feature>
<feature type="compositionally biased region" description="Basic and acidic residues" evidence="2">
    <location>
        <begin position="149"/>
        <end position="162"/>
    </location>
</feature>
<feature type="compositionally biased region" description="Acidic residues" evidence="2">
    <location>
        <begin position="163"/>
        <end position="179"/>
    </location>
</feature>
<feature type="compositionally biased region" description="Acidic residues" evidence="2">
    <location>
        <begin position="211"/>
        <end position="230"/>
    </location>
</feature>
<feature type="compositionally biased region" description="Acidic residues" evidence="2">
    <location>
        <begin position="280"/>
        <end position="289"/>
    </location>
</feature>
<feature type="compositionally biased region" description="Polar residues" evidence="2">
    <location>
        <begin position="306"/>
        <end position="317"/>
    </location>
</feature>
<feature type="compositionally biased region" description="Basic and acidic residues" evidence="2">
    <location>
        <begin position="397"/>
        <end position="408"/>
    </location>
</feature>
<feature type="compositionally biased region" description="Low complexity" evidence="2">
    <location>
        <begin position="415"/>
        <end position="431"/>
    </location>
</feature>
<feature type="compositionally biased region" description="Basic and acidic residues" evidence="2">
    <location>
        <begin position="446"/>
        <end position="461"/>
    </location>
</feature>
<feature type="compositionally biased region" description="Acidic residues" evidence="2">
    <location>
        <begin position="533"/>
        <end position="543"/>
    </location>
</feature>
<feature type="compositionally biased region" description="Low complexity" evidence="2">
    <location>
        <begin position="554"/>
        <end position="563"/>
    </location>
</feature>
<feature type="compositionally biased region" description="Basic and acidic residues" evidence="2">
    <location>
        <begin position="662"/>
        <end position="671"/>
    </location>
</feature>
<feature type="compositionally biased region" description="Basic and acidic residues" evidence="2">
    <location>
        <begin position="694"/>
        <end position="708"/>
    </location>
</feature>
<gene>
    <name evidence="7" type="primary">hsr-9</name>
    <name evidence="7" type="ORF">T05F1.6</name>
</gene>
<dbReference type="EMBL" id="BX284601">
    <property type="protein sequence ID" value="CAF31485.1"/>
    <property type="molecule type" value="Genomic_DNA"/>
</dbReference>
<dbReference type="RefSeq" id="NP_001021610.1">
    <property type="nucleotide sequence ID" value="NM_001026439.3"/>
</dbReference>
<dbReference type="SMR" id="Q7JKP6"/>
<dbReference type="FunCoup" id="Q7JKP6">
    <property type="interactions" value="815"/>
</dbReference>
<dbReference type="STRING" id="6239.T05F1.6.1"/>
<dbReference type="PaxDb" id="6239-T05F1.6"/>
<dbReference type="PeptideAtlas" id="Q7JKP6"/>
<dbReference type="EnsemblMetazoa" id="T05F1.6.1">
    <property type="protein sequence ID" value="T05F1.6.1"/>
    <property type="gene ID" value="WBGene00002027"/>
</dbReference>
<dbReference type="GeneID" id="3565010"/>
<dbReference type="KEGG" id="cel:CELE_T05F1.6"/>
<dbReference type="UCSC" id="T05F1.6">
    <property type="organism name" value="c. elegans"/>
</dbReference>
<dbReference type="AGR" id="WB:WBGene00002027"/>
<dbReference type="CTD" id="3565010"/>
<dbReference type="WormBase" id="T05F1.6">
    <property type="protein sequence ID" value="CE36405"/>
    <property type="gene ID" value="WBGene00002027"/>
    <property type="gene designation" value="hsr-9"/>
</dbReference>
<dbReference type="eggNOG" id="KOG3548">
    <property type="taxonomic scope" value="Eukaryota"/>
</dbReference>
<dbReference type="GeneTree" id="ENSGT00390000011891"/>
<dbReference type="HOGENOM" id="CLU_277883_0_0_1"/>
<dbReference type="InParanoid" id="Q7JKP6"/>
<dbReference type="OMA" id="EHHPEPL"/>
<dbReference type="OrthoDB" id="129353at2759"/>
<dbReference type="Reactome" id="R-CEL-3232118">
    <property type="pathway name" value="SUMOylation of transcription factors"/>
</dbReference>
<dbReference type="PRO" id="PR:Q7JKP6"/>
<dbReference type="Proteomes" id="UP000001940">
    <property type="component" value="Chromosome I"/>
</dbReference>
<dbReference type="Bgee" id="WBGene00002027">
    <property type="expression patterns" value="Expressed in germ line (C elegans) and 4 other cell types or tissues"/>
</dbReference>
<dbReference type="GO" id="GO:0005634">
    <property type="term" value="C:nucleus"/>
    <property type="evidence" value="ECO:0000314"/>
    <property type="project" value="WormBase"/>
</dbReference>
<dbReference type="GO" id="GO:0042393">
    <property type="term" value="F:histone binding"/>
    <property type="evidence" value="ECO:0000318"/>
    <property type="project" value="GO_Central"/>
</dbReference>
<dbReference type="GO" id="GO:0000077">
    <property type="term" value="P:DNA damage checkpoint signaling"/>
    <property type="evidence" value="ECO:0000318"/>
    <property type="project" value="GO_Central"/>
</dbReference>
<dbReference type="GO" id="GO:0006281">
    <property type="term" value="P:DNA repair"/>
    <property type="evidence" value="ECO:0007669"/>
    <property type="project" value="UniProtKB-KW"/>
</dbReference>
<dbReference type="GO" id="GO:0045944">
    <property type="term" value="P:positive regulation of transcription by RNA polymerase II"/>
    <property type="evidence" value="ECO:0000318"/>
    <property type="project" value="GO_Central"/>
</dbReference>
<dbReference type="CDD" id="cd17745">
    <property type="entry name" value="BRCT_p53bp1_rpt1"/>
    <property type="match status" value="1"/>
</dbReference>
<dbReference type="CDD" id="cd17724">
    <property type="entry name" value="BRCT_p53bp1_rpt2"/>
    <property type="match status" value="1"/>
</dbReference>
<dbReference type="Gene3D" id="3.40.50.10190">
    <property type="entry name" value="BRCT domain"/>
    <property type="match status" value="2"/>
</dbReference>
<dbReference type="InterPro" id="IPR001357">
    <property type="entry name" value="BRCT_dom"/>
</dbReference>
<dbReference type="InterPro" id="IPR036420">
    <property type="entry name" value="BRCT_dom_sf"/>
</dbReference>
<dbReference type="InterPro" id="IPR047249">
    <property type="entry name" value="BRCT_p53bp1-like_rpt1"/>
</dbReference>
<dbReference type="InterPro" id="IPR047250">
    <property type="entry name" value="BRCT_p53bp1-like_rpt2"/>
</dbReference>
<dbReference type="InterPro" id="IPR056492">
    <property type="entry name" value="SH3_Hsr9"/>
</dbReference>
<dbReference type="InterPro" id="IPR047252">
    <property type="entry name" value="TP53BP1-like"/>
</dbReference>
<dbReference type="PANTHER" id="PTHR15321:SF3">
    <property type="entry name" value="TP53-BINDING PROTEIN 1"/>
    <property type="match status" value="1"/>
</dbReference>
<dbReference type="PANTHER" id="PTHR15321">
    <property type="entry name" value="TUMOR SUPPRESSOR P53-BINDING PROTEIN 1"/>
    <property type="match status" value="1"/>
</dbReference>
<dbReference type="Pfam" id="PF00533">
    <property type="entry name" value="BRCT"/>
    <property type="match status" value="1"/>
</dbReference>
<dbReference type="Pfam" id="PF18428">
    <property type="entry name" value="BRCT_3"/>
    <property type="match status" value="1"/>
</dbReference>
<dbReference type="Pfam" id="PF24680">
    <property type="entry name" value="SH3_Hsr9"/>
    <property type="match status" value="1"/>
</dbReference>
<dbReference type="SMART" id="SM00292">
    <property type="entry name" value="BRCT"/>
    <property type="match status" value="1"/>
</dbReference>
<dbReference type="SUPFAM" id="SSF52113">
    <property type="entry name" value="BRCT domain"/>
    <property type="match status" value="2"/>
</dbReference>
<dbReference type="PROSITE" id="PS50172">
    <property type="entry name" value="BRCT"/>
    <property type="match status" value="1"/>
</dbReference>
<keyword id="KW-0227">DNA damage</keyword>
<keyword id="KW-0234">DNA repair</keyword>
<keyword id="KW-0539">Nucleus</keyword>
<keyword id="KW-1185">Reference proteome</keyword>
<organism evidence="6">
    <name type="scientific">Caenorhabditis elegans</name>
    <dbReference type="NCBI Taxonomy" id="6239"/>
    <lineage>
        <taxon>Eukaryota</taxon>
        <taxon>Metazoa</taxon>
        <taxon>Ecdysozoa</taxon>
        <taxon>Nematoda</taxon>
        <taxon>Chromadorea</taxon>
        <taxon>Rhabditida</taxon>
        <taxon>Rhabditina</taxon>
        <taxon>Rhabditomorpha</taxon>
        <taxon>Rhabditoidea</taxon>
        <taxon>Rhabditidae</taxon>
        <taxon>Peloderinae</taxon>
        <taxon>Caenorhabditis</taxon>
    </lineage>
</organism>
<accession>Q7JKP6</accession>
<comment type="function">
    <text evidence="3">May have a role in DNA double-strand break repair following gamma-irradiation.</text>
</comment>
<comment type="subcellular location">
    <subcellularLocation>
        <location evidence="3">Nucleus</location>
    </subcellularLocation>
    <text evidence="3">Localized to the nuclei of proliferating germ cells.</text>
</comment>
<comment type="tissue specificity">
    <text evidence="3">Expressed in germ cells.</text>
</comment>
<comment type="induction">
    <text evidence="3">Induced by DNA damage cues including gamma-irradiation, and UV and hydroxyurea treatment.</text>
</comment>
<comment type="disruption phenotype">
    <text evidence="3">Reduced number of apoptotic cells following gamma-irradiation. In a rad-54 knockdown but not in brc-1 mutant background, restores levels of embryonic survival and chromosomal aberrations in oocytes following gamma-irradiation to almost wildtype. Mutants show slightly reduced levels of egl-1 mRNA expression.</text>
</comment>
<name>HSR9_CAEEL</name>
<evidence type="ECO:0000255" key="1">
    <source>
        <dbReference type="PROSITE-ProRule" id="PRU00033"/>
    </source>
</evidence>
<evidence type="ECO:0000256" key="2">
    <source>
        <dbReference type="SAM" id="MobiDB-lite"/>
    </source>
</evidence>
<evidence type="ECO:0000269" key="3">
    <source>
    </source>
</evidence>
<evidence type="ECO:0000303" key="4">
    <source>
    </source>
</evidence>
<evidence type="ECO:0000305" key="5"/>
<evidence type="ECO:0000312" key="6">
    <source>
        <dbReference type="Proteomes" id="UP000001940"/>
    </source>
</evidence>
<evidence type="ECO:0000312" key="7">
    <source>
        <dbReference type="WormBase" id="T05F1.6"/>
    </source>
</evidence>
<sequence length="1165" mass="127607">MASSSNTMEFEEDDSTVTQTSLPTTTSVLDKSRSLFGNSAVISTPARDSTPDGHIVDSSVITKSSVIIEAEDEPDVAADVTALDKEKAEDEPQCSAGKDAKSGESMNDSEKSESPIEEGEGETFEKKIISMDTSDDKLDIAESISVSNDTEKPEENEEKVVGDEDEEDIDDVQEDDEDEAPKKKTKKAVSTSDDDDLHEDDSPKGGSVSDEKEEPENEDDTEEPENEVEVESPVKEQADSGEPIENVNDDKASEPGVGEISQDSVDDSQKIGLDSKSPDGESEANEENQESQSSSRSTRRAKRVSATVSSTPSSNTPRRGGRGQKSEVNADETKTPIVSNSTPRRGRSSRGGDRDEVIDPTENVVGDSGVEETSPRKGRSRRSVATEDTSVTEEVENTEHPTEEETPKQGRGRRSAASSSATSSAVPTPRSTRGRGRKSQANEENLQEKETEDPTKTHDTNQAKSTRTPRGRRSNADAETMESVEAEKVETPTSSRRSTRAKPPAKSAPVTPAVTNKRTTVRGRKKQGSITEDPIEEADETIEETLPQKKGRGAAKSAPSSSKKSAEYDPYDLDTEMEHHPEPLKNIHMEVHNFGAVKYAKLGNSESKYSMTEKAAESRIAELQSSPAAKNRRSLADMTPGKDKMKHRVSSVGTSGRRSRAKKEEEHHENDIEMEDAPATATPASSNRGRKRKSEASDIKTPPAKKEPVIPLKNLSDEDQLLVDHPQDDNEPHAPGARVYAVFQKMFYPAVVLSERDGLGRYKVQFTVDNVIKDVPNSGIIPLRALSPGKTAVYNESDVRLDSGPNDISAAEWKKGKLTISIMDEDGEPTDEVKVVDWYDVSFDHSEWRDYVKSKDQSATAIVTSNITTISEATRARKPTTVSNQAKPKGRKKKGVDLVSSRGGSASPAEEEEKLLPMNEEAIGKNIFTGKVFMLTSANRSNSASVPSMFKKKNLMNFITQNGGIVTEQLNSFQERYSNYEPLLISDTYYRTHKYLAALARGVPCVNNTWLQACGEQGKCVDYTDYVLPAGASIFDESQDMPAPKNPSELLKGTTIYVHSTHSAREVTQTGPGGTFIEIWKPILELLGADVVDGDWETLDETGLKFDVVLVDGTFRDEVMEYADTIGASRVTSEWVIQTIILGKAPEPNAHPKFDPYRLHHRTRH</sequence>
<protein>
    <recommendedName>
        <fullName evidence="5">Protein hsr-9</fullName>
    </recommendedName>
    <alternativeName>
        <fullName evidence="5">Heat shock related protein 9</fullName>
    </alternativeName>
    <alternativeName>
        <fullName evidence="4">Tumor suppressor p53-binding protein 1 homolog</fullName>
        <shortName evidence="4">53BP1</shortName>
    </alternativeName>
</protein>
<proteinExistence type="evidence at transcript level"/>